<gene>
    <name type="primary">MT-CYB</name>
    <name type="synonym">COB</name>
    <name type="synonym">CYTB</name>
    <name type="synonym">MTCYB</name>
</gene>
<comment type="function">
    <text evidence="2">Component of the ubiquinol-cytochrome c reductase complex (complex III or cytochrome b-c1 complex) that is part of the mitochondrial respiratory chain. The b-c1 complex mediates electron transfer from ubiquinol to cytochrome c. Contributes to the generation of a proton gradient across the mitochondrial membrane that is then used for ATP synthesis.</text>
</comment>
<comment type="cofactor">
    <cofactor evidence="2">
        <name>heme b</name>
        <dbReference type="ChEBI" id="CHEBI:60344"/>
    </cofactor>
    <text evidence="2">Binds 2 heme b groups non-covalently.</text>
</comment>
<comment type="subunit">
    <text evidence="2">The cytochrome bc1 complex contains 11 subunits: 3 respiratory subunits (MT-CYB, CYC1 and UQCRFS1), 2 core proteins (UQCRC1 and UQCRC2) and 6 low-molecular weight proteins (UQCRH/QCR6, UQCRB/QCR7, UQCRQ/QCR8, UQCR10/QCR9, UQCR11/QCR10 and a cleavage product of UQCRFS1). This cytochrome bc1 complex then forms a dimer.</text>
</comment>
<comment type="subcellular location">
    <subcellularLocation>
        <location evidence="2">Mitochondrion inner membrane</location>
        <topology evidence="2">Multi-pass membrane protein</topology>
    </subcellularLocation>
</comment>
<comment type="miscellaneous">
    <text evidence="1">Heme 1 (or BL or b562) is low-potential and absorbs at about 562 nm, and heme 2 (or BH or b566) is high-potential and absorbs at about 566 nm.</text>
</comment>
<comment type="similarity">
    <text evidence="3 4">Belongs to the cytochrome b family.</text>
</comment>
<comment type="caution">
    <text evidence="2">The full-length protein contains only eight transmembrane helices, not nine as predicted by bioinformatics tools.</text>
</comment>
<geneLocation type="mitochondrion"/>
<proteinExistence type="inferred from homology"/>
<name>CYB_SCALA</name>
<reference key="1">
    <citation type="journal article" date="2003" name="Mol. Phylogenet. Evol.">
        <title>Molecular phylogenetic relationships of moles, shrew moles, and desmans from the new and old worlds.</title>
        <authorList>
            <person name="Shinohara A."/>
            <person name="Campbell K.L."/>
            <person name="Suzuki H."/>
        </authorList>
    </citation>
    <scope>NUCLEOTIDE SEQUENCE [GENOMIC DNA]</scope>
    <source>
        <strain>Isolate BF-1</strain>
        <strain>Isolate BF-2</strain>
    </source>
</reference>
<protein>
    <recommendedName>
        <fullName>Cytochrome b</fullName>
    </recommendedName>
    <alternativeName>
        <fullName>Complex III subunit 3</fullName>
    </alternativeName>
    <alternativeName>
        <fullName>Complex III subunit III</fullName>
    </alternativeName>
    <alternativeName>
        <fullName>Cytochrome b-c1 complex subunit 3</fullName>
    </alternativeName>
    <alternativeName>
        <fullName>Ubiquinol-cytochrome-c reductase complex cytochrome b subunit</fullName>
    </alternativeName>
</protein>
<keyword id="KW-0249">Electron transport</keyword>
<keyword id="KW-0349">Heme</keyword>
<keyword id="KW-0408">Iron</keyword>
<keyword id="KW-0472">Membrane</keyword>
<keyword id="KW-0479">Metal-binding</keyword>
<keyword id="KW-0496">Mitochondrion</keyword>
<keyword id="KW-0999">Mitochondrion inner membrane</keyword>
<keyword id="KW-0679">Respiratory chain</keyword>
<keyword id="KW-0812">Transmembrane</keyword>
<keyword id="KW-1133">Transmembrane helix</keyword>
<keyword id="KW-0813">Transport</keyword>
<keyword id="KW-0830">Ubiquinone</keyword>
<sequence length="379" mass="42649">MTSIRKTHPLMKIINNSFIDLPTPSNISSWWNFGSLLGICLILQILTGLFLAMHYTSDTMTAFSSVTHICRDVNYGWLIRYMHANGASMFFICLFLHVGRGLYYGSYMFMETWNIGVLLLFAVMATAFMGYVLPWGQMSFWGATVITNLLSAIPYIGTDLVEWIWGGFSVDKATLTRFFAFHFILPFIVTALAGVHLLFLHETGSNNPSGLSSDSDKIPFHPYYTIKDILGALIMILALSSLVLFSPDLLGDPDNYIPANPLNTPPHIKPEWYFLFAYAILRSIPNKLGGVLALVFSILVLMLMPLLHTSKQRSMMFRPISQCLFWLLVADLLTLTWIGGQPVEHPFVIIGQLASILYFTLILILMPAASLLENNLLKW</sequence>
<dbReference type="EMBL" id="AB076813">
    <property type="protein sequence ID" value="BAC75898.1"/>
    <property type="molecule type" value="Genomic_DNA"/>
</dbReference>
<dbReference type="EMBL" id="AB076814">
    <property type="protein sequence ID" value="BAC75899.1"/>
    <property type="molecule type" value="Genomic_DNA"/>
</dbReference>
<dbReference type="SMR" id="Q85DF5"/>
<dbReference type="GO" id="GO:0005743">
    <property type="term" value="C:mitochondrial inner membrane"/>
    <property type="evidence" value="ECO:0007669"/>
    <property type="project" value="UniProtKB-SubCell"/>
</dbReference>
<dbReference type="GO" id="GO:0045275">
    <property type="term" value="C:respiratory chain complex III"/>
    <property type="evidence" value="ECO:0007669"/>
    <property type="project" value="InterPro"/>
</dbReference>
<dbReference type="GO" id="GO:0046872">
    <property type="term" value="F:metal ion binding"/>
    <property type="evidence" value="ECO:0007669"/>
    <property type="project" value="UniProtKB-KW"/>
</dbReference>
<dbReference type="GO" id="GO:0008121">
    <property type="term" value="F:ubiquinol-cytochrome-c reductase activity"/>
    <property type="evidence" value="ECO:0007669"/>
    <property type="project" value="InterPro"/>
</dbReference>
<dbReference type="GO" id="GO:0006122">
    <property type="term" value="P:mitochondrial electron transport, ubiquinol to cytochrome c"/>
    <property type="evidence" value="ECO:0007669"/>
    <property type="project" value="TreeGrafter"/>
</dbReference>
<dbReference type="CDD" id="cd00290">
    <property type="entry name" value="cytochrome_b_C"/>
    <property type="match status" value="1"/>
</dbReference>
<dbReference type="CDD" id="cd00284">
    <property type="entry name" value="Cytochrome_b_N"/>
    <property type="match status" value="1"/>
</dbReference>
<dbReference type="FunFam" id="1.20.810.10:FF:000002">
    <property type="entry name" value="Cytochrome b"/>
    <property type="match status" value="1"/>
</dbReference>
<dbReference type="Gene3D" id="1.20.810.10">
    <property type="entry name" value="Cytochrome Bc1 Complex, Chain C"/>
    <property type="match status" value="1"/>
</dbReference>
<dbReference type="InterPro" id="IPR005798">
    <property type="entry name" value="Cyt_b/b6_C"/>
</dbReference>
<dbReference type="InterPro" id="IPR036150">
    <property type="entry name" value="Cyt_b/b6_C_sf"/>
</dbReference>
<dbReference type="InterPro" id="IPR005797">
    <property type="entry name" value="Cyt_b/b6_N"/>
</dbReference>
<dbReference type="InterPro" id="IPR027387">
    <property type="entry name" value="Cytb/b6-like_sf"/>
</dbReference>
<dbReference type="InterPro" id="IPR030689">
    <property type="entry name" value="Cytochrome_b"/>
</dbReference>
<dbReference type="InterPro" id="IPR048260">
    <property type="entry name" value="Cytochrome_b_C_euk/bac"/>
</dbReference>
<dbReference type="InterPro" id="IPR048259">
    <property type="entry name" value="Cytochrome_b_N_euk/bac"/>
</dbReference>
<dbReference type="InterPro" id="IPR016174">
    <property type="entry name" value="Di-haem_cyt_TM"/>
</dbReference>
<dbReference type="PANTHER" id="PTHR19271">
    <property type="entry name" value="CYTOCHROME B"/>
    <property type="match status" value="1"/>
</dbReference>
<dbReference type="PANTHER" id="PTHR19271:SF16">
    <property type="entry name" value="CYTOCHROME B"/>
    <property type="match status" value="1"/>
</dbReference>
<dbReference type="Pfam" id="PF00032">
    <property type="entry name" value="Cytochrom_B_C"/>
    <property type="match status" value="1"/>
</dbReference>
<dbReference type="Pfam" id="PF00033">
    <property type="entry name" value="Cytochrome_B"/>
    <property type="match status" value="1"/>
</dbReference>
<dbReference type="PIRSF" id="PIRSF038885">
    <property type="entry name" value="COB"/>
    <property type="match status" value="1"/>
</dbReference>
<dbReference type="SUPFAM" id="SSF81648">
    <property type="entry name" value="a domain/subunit of cytochrome bc1 complex (Ubiquinol-cytochrome c reductase)"/>
    <property type="match status" value="1"/>
</dbReference>
<dbReference type="SUPFAM" id="SSF81342">
    <property type="entry name" value="Transmembrane di-heme cytochromes"/>
    <property type="match status" value="1"/>
</dbReference>
<dbReference type="PROSITE" id="PS51003">
    <property type="entry name" value="CYTB_CTER"/>
    <property type="match status" value="1"/>
</dbReference>
<dbReference type="PROSITE" id="PS51002">
    <property type="entry name" value="CYTB_NTER"/>
    <property type="match status" value="1"/>
</dbReference>
<feature type="chain" id="PRO_0000061524" description="Cytochrome b">
    <location>
        <begin position="1"/>
        <end position="379"/>
    </location>
</feature>
<feature type="transmembrane region" description="Helical" evidence="2">
    <location>
        <begin position="33"/>
        <end position="53"/>
    </location>
</feature>
<feature type="transmembrane region" description="Helical" evidence="2">
    <location>
        <begin position="77"/>
        <end position="98"/>
    </location>
</feature>
<feature type="transmembrane region" description="Helical" evidence="2">
    <location>
        <begin position="113"/>
        <end position="133"/>
    </location>
</feature>
<feature type="transmembrane region" description="Helical" evidence="2">
    <location>
        <begin position="178"/>
        <end position="198"/>
    </location>
</feature>
<feature type="transmembrane region" description="Helical" evidence="2">
    <location>
        <begin position="226"/>
        <end position="246"/>
    </location>
</feature>
<feature type="transmembrane region" description="Helical" evidence="2">
    <location>
        <begin position="288"/>
        <end position="308"/>
    </location>
</feature>
<feature type="transmembrane region" description="Helical" evidence="2">
    <location>
        <begin position="320"/>
        <end position="340"/>
    </location>
</feature>
<feature type="transmembrane region" description="Helical" evidence="2">
    <location>
        <begin position="347"/>
        <end position="367"/>
    </location>
</feature>
<feature type="binding site" description="axial binding residue" evidence="2">
    <location>
        <position position="83"/>
    </location>
    <ligand>
        <name>heme b</name>
        <dbReference type="ChEBI" id="CHEBI:60344"/>
        <label>b562</label>
    </ligand>
    <ligandPart>
        <name>Fe</name>
        <dbReference type="ChEBI" id="CHEBI:18248"/>
    </ligandPart>
</feature>
<feature type="binding site" description="axial binding residue" evidence="2">
    <location>
        <position position="97"/>
    </location>
    <ligand>
        <name>heme b</name>
        <dbReference type="ChEBI" id="CHEBI:60344"/>
        <label>b566</label>
    </ligand>
    <ligandPart>
        <name>Fe</name>
        <dbReference type="ChEBI" id="CHEBI:18248"/>
    </ligandPart>
</feature>
<feature type="binding site" description="axial binding residue" evidence="2">
    <location>
        <position position="182"/>
    </location>
    <ligand>
        <name>heme b</name>
        <dbReference type="ChEBI" id="CHEBI:60344"/>
        <label>b562</label>
    </ligand>
    <ligandPart>
        <name>Fe</name>
        <dbReference type="ChEBI" id="CHEBI:18248"/>
    </ligandPart>
</feature>
<feature type="binding site" description="axial binding residue" evidence="2">
    <location>
        <position position="196"/>
    </location>
    <ligand>
        <name>heme b</name>
        <dbReference type="ChEBI" id="CHEBI:60344"/>
        <label>b566</label>
    </ligand>
    <ligandPart>
        <name>Fe</name>
        <dbReference type="ChEBI" id="CHEBI:18248"/>
    </ligandPart>
</feature>
<feature type="binding site" evidence="2">
    <location>
        <position position="201"/>
    </location>
    <ligand>
        <name>a ubiquinone</name>
        <dbReference type="ChEBI" id="CHEBI:16389"/>
    </ligand>
</feature>
<feature type="sequence variant" description="In strain: Isolate BF-2.">
    <original>S</original>
    <variation>N</variation>
    <location>
        <position position="3"/>
    </location>
</feature>
<accession>Q85DF5</accession>
<accession>Q85DF4</accession>
<evidence type="ECO:0000250" key="1"/>
<evidence type="ECO:0000250" key="2">
    <source>
        <dbReference type="UniProtKB" id="P00157"/>
    </source>
</evidence>
<evidence type="ECO:0000255" key="3">
    <source>
        <dbReference type="PROSITE-ProRule" id="PRU00967"/>
    </source>
</evidence>
<evidence type="ECO:0000255" key="4">
    <source>
        <dbReference type="PROSITE-ProRule" id="PRU00968"/>
    </source>
</evidence>
<organism>
    <name type="scientific">Scapanus latimanus</name>
    <name type="common">Broad-footed mole</name>
    <name type="synonym">Scapanus anthonyi</name>
    <dbReference type="NCBI Taxonomy" id="182673"/>
    <lineage>
        <taxon>Eukaryota</taxon>
        <taxon>Metazoa</taxon>
        <taxon>Chordata</taxon>
        <taxon>Craniata</taxon>
        <taxon>Vertebrata</taxon>
        <taxon>Euteleostomi</taxon>
        <taxon>Mammalia</taxon>
        <taxon>Eutheria</taxon>
        <taxon>Laurasiatheria</taxon>
        <taxon>Eulipotyphla</taxon>
        <taxon>Talpidae</taxon>
        <taxon>Scapanus</taxon>
    </lineage>
</organism>